<sequence length="149" mass="15699">MDLILLQKVTNLGNLGDKVSVKPGYGRNFLVPQGKAVPATAANVEAFETKRAEYEAKANTILADAQSRATKFEGASVTIGAHASTEGKLYGSVGPRDIAEAFTAAGLPLEKSEVILGEGAFRNVGEYDVVLHLHADVETTVKVIVESDA</sequence>
<accession>Q8PAC0</accession>
<organism>
    <name type="scientific">Xanthomonas campestris pv. campestris (strain ATCC 33913 / DSM 3586 / NCPPB 528 / LMG 568 / P 25)</name>
    <dbReference type="NCBI Taxonomy" id="190485"/>
    <lineage>
        <taxon>Bacteria</taxon>
        <taxon>Pseudomonadati</taxon>
        <taxon>Pseudomonadota</taxon>
        <taxon>Gammaproteobacteria</taxon>
        <taxon>Lysobacterales</taxon>
        <taxon>Lysobacteraceae</taxon>
        <taxon>Xanthomonas</taxon>
    </lineage>
</organism>
<evidence type="ECO:0000255" key="1">
    <source>
        <dbReference type="HAMAP-Rule" id="MF_00503"/>
    </source>
</evidence>
<evidence type="ECO:0000305" key="2"/>
<keyword id="KW-1185">Reference proteome</keyword>
<keyword id="KW-0687">Ribonucleoprotein</keyword>
<keyword id="KW-0689">Ribosomal protein</keyword>
<keyword id="KW-0694">RNA-binding</keyword>
<keyword id="KW-0699">rRNA-binding</keyword>
<protein>
    <recommendedName>
        <fullName evidence="1">Large ribosomal subunit protein bL9</fullName>
    </recommendedName>
    <alternativeName>
        <fullName evidence="2">50S ribosomal protein L9</fullName>
    </alternativeName>
</protein>
<feature type="chain" id="PRO_0000176707" description="Large ribosomal subunit protein bL9">
    <location>
        <begin position="1"/>
        <end position="149"/>
    </location>
</feature>
<gene>
    <name evidence="1" type="primary">rplI</name>
    <name type="ordered locus">XCC1565</name>
</gene>
<proteinExistence type="inferred from homology"/>
<comment type="function">
    <text evidence="1">Binds to the 23S rRNA.</text>
</comment>
<comment type="similarity">
    <text evidence="1">Belongs to the bacterial ribosomal protein bL9 family.</text>
</comment>
<reference key="1">
    <citation type="journal article" date="2002" name="Nature">
        <title>Comparison of the genomes of two Xanthomonas pathogens with differing host specificities.</title>
        <authorList>
            <person name="da Silva A.C.R."/>
            <person name="Ferro J.A."/>
            <person name="Reinach F.C."/>
            <person name="Farah C.S."/>
            <person name="Furlan L.R."/>
            <person name="Quaggio R.B."/>
            <person name="Monteiro-Vitorello C.B."/>
            <person name="Van Sluys M.A."/>
            <person name="Almeida N.F. Jr."/>
            <person name="Alves L.M.C."/>
            <person name="do Amaral A.M."/>
            <person name="Bertolini M.C."/>
            <person name="Camargo L.E.A."/>
            <person name="Camarotte G."/>
            <person name="Cannavan F."/>
            <person name="Cardozo J."/>
            <person name="Chambergo F."/>
            <person name="Ciapina L.P."/>
            <person name="Cicarelli R.M.B."/>
            <person name="Coutinho L.L."/>
            <person name="Cursino-Santos J.R."/>
            <person name="El-Dorry H."/>
            <person name="Faria J.B."/>
            <person name="Ferreira A.J.S."/>
            <person name="Ferreira R.C.C."/>
            <person name="Ferro M.I.T."/>
            <person name="Formighieri E.F."/>
            <person name="Franco M.C."/>
            <person name="Greggio C.C."/>
            <person name="Gruber A."/>
            <person name="Katsuyama A.M."/>
            <person name="Kishi L.T."/>
            <person name="Leite R.P."/>
            <person name="Lemos E.G.M."/>
            <person name="Lemos M.V.F."/>
            <person name="Locali E.C."/>
            <person name="Machado M.A."/>
            <person name="Madeira A.M.B.N."/>
            <person name="Martinez-Rossi N.M."/>
            <person name="Martins E.C."/>
            <person name="Meidanis J."/>
            <person name="Menck C.F.M."/>
            <person name="Miyaki C.Y."/>
            <person name="Moon D.H."/>
            <person name="Moreira L.M."/>
            <person name="Novo M.T.M."/>
            <person name="Okura V.K."/>
            <person name="Oliveira M.C."/>
            <person name="Oliveira V.R."/>
            <person name="Pereira H.A."/>
            <person name="Rossi A."/>
            <person name="Sena J.A.D."/>
            <person name="Silva C."/>
            <person name="de Souza R.F."/>
            <person name="Spinola L.A.F."/>
            <person name="Takita M.A."/>
            <person name="Tamura R.E."/>
            <person name="Teixeira E.C."/>
            <person name="Tezza R.I.D."/>
            <person name="Trindade dos Santos M."/>
            <person name="Truffi D."/>
            <person name="Tsai S.M."/>
            <person name="White F.F."/>
            <person name="Setubal J.C."/>
            <person name="Kitajima J.P."/>
        </authorList>
    </citation>
    <scope>NUCLEOTIDE SEQUENCE [LARGE SCALE GENOMIC DNA]</scope>
    <source>
        <strain>ATCC 33913 / DSM 3586 / NCPPB 528 / LMG 568 / P 25</strain>
    </source>
</reference>
<dbReference type="EMBL" id="AE008922">
    <property type="protein sequence ID" value="AAM40860.1"/>
    <property type="molecule type" value="Genomic_DNA"/>
</dbReference>
<dbReference type="RefSeq" id="NP_636936.1">
    <property type="nucleotide sequence ID" value="NC_003902.1"/>
</dbReference>
<dbReference type="RefSeq" id="WP_005991240.1">
    <property type="nucleotide sequence ID" value="NC_003902.1"/>
</dbReference>
<dbReference type="SMR" id="Q8PAC0"/>
<dbReference type="STRING" id="190485.XCC1565"/>
<dbReference type="EnsemblBacteria" id="AAM40860">
    <property type="protein sequence ID" value="AAM40860"/>
    <property type="gene ID" value="XCC1565"/>
</dbReference>
<dbReference type="GeneID" id="58013843"/>
<dbReference type="KEGG" id="xcc:XCC1565"/>
<dbReference type="PATRIC" id="fig|190485.4.peg.1678"/>
<dbReference type="eggNOG" id="COG0359">
    <property type="taxonomic scope" value="Bacteria"/>
</dbReference>
<dbReference type="HOGENOM" id="CLU_078938_4_1_6"/>
<dbReference type="OrthoDB" id="9788336at2"/>
<dbReference type="Proteomes" id="UP000001010">
    <property type="component" value="Chromosome"/>
</dbReference>
<dbReference type="GO" id="GO:0022625">
    <property type="term" value="C:cytosolic large ribosomal subunit"/>
    <property type="evidence" value="ECO:0000318"/>
    <property type="project" value="GO_Central"/>
</dbReference>
<dbReference type="GO" id="GO:0019843">
    <property type="term" value="F:rRNA binding"/>
    <property type="evidence" value="ECO:0007669"/>
    <property type="project" value="UniProtKB-UniRule"/>
</dbReference>
<dbReference type="GO" id="GO:0003735">
    <property type="term" value="F:structural constituent of ribosome"/>
    <property type="evidence" value="ECO:0007669"/>
    <property type="project" value="InterPro"/>
</dbReference>
<dbReference type="GO" id="GO:0006412">
    <property type="term" value="P:translation"/>
    <property type="evidence" value="ECO:0007669"/>
    <property type="project" value="UniProtKB-UniRule"/>
</dbReference>
<dbReference type="FunFam" id="3.10.430.100:FF:000007">
    <property type="entry name" value="50S ribosomal protein L9"/>
    <property type="match status" value="1"/>
</dbReference>
<dbReference type="FunFam" id="3.40.5.10:FF:000001">
    <property type="entry name" value="50S ribosomal protein L9"/>
    <property type="match status" value="1"/>
</dbReference>
<dbReference type="Gene3D" id="3.10.430.100">
    <property type="entry name" value="Ribosomal protein L9, C-terminal domain"/>
    <property type="match status" value="1"/>
</dbReference>
<dbReference type="Gene3D" id="3.40.5.10">
    <property type="entry name" value="Ribosomal protein L9, N-terminal domain"/>
    <property type="match status" value="1"/>
</dbReference>
<dbReference type="HAMAP" id="MF_00503">
    <property type="entry name" value="Ribosomal_bL9"/>
    <property type="match status" value="1"/>
</dbReference>
<dbReference type="InterPro" id="IPR000244">
    <property type="entry name" value="Ribosomal_bL9"/>
</dbReference>
<dbReference type="InterPro" id="IPR009027">
    <property type="entry name" value="Ribosomal_bL9/RNase_H1_N"/>
</dbReference>
<dbReference type="InterPro" id="IPR020594">
    <property type="entry name" value="Ribosomal_bL9_bac/chp"/>
</dbReference>
<dbReference type="InterPro" id="IPR020069">
    <property type="entry name" value="Ribosomal_bL9_C"/>
</dbReference>
<dbReference type="InterPro" id="IPR036791">
    <property type="entry name" value="Ribosomal_bL9_C_sf"/>
</dbReference>
<dbReference type="InterPro" id="IPR020070">
    <property type="entry name" value="Ribosomal_bL9_N"/>
</dbReference>
<dbReference type="InterPro" id="IPR036935">
    <property type="entry name" value="Ribosomal_bL9_N_sf"/>
</dbReference>
<dbReference type="NCBIfam" id="TIGR00158">
    <property type="entry name" value="L9"/>
    <property type="match status" value="1"/>
</dbReference>
<dbReference type="PANTHER" id="PTHR21368">
    <property type="entry name" value="50S RIBOSOMAL PROTEIN L9"/>
    <property type="match status" value="1"/>
</dbReference>
<dbReference type="Pfam" id="PF03948">
    <property type="entry name" value="Ribosomal_L9_C"/>
    <property type="match status" value="1"/>
</dbReference>
<dbReference type="Pfam" id="PF01281">
    <property type="entry name" value="Ribosomal_L9_N"/>
    <property type="match status" value="1"/>
</dbReference>
<dbReference type="SUPFAM" id="SSF55658">
    <property type="entry name" value="L9 N-domain-like"/>
    <property type="match status" value="1"/>
</dbReference>
<dbReference type="SUPFAM" id="SSF55653">
    <property type="entry name" value="Ribosomal protein L9 C-domain"/>
    <property type="match status" value="1"/>
</dbReference>
<dbReference type="PROSITE" id="PS00651">
    <property type="entry name" value="RIBOSOMAL_L9"/>
    <property type="match status" value="1"/>
</dbReference>
<name>RL9_XANCP</name>